<accession>P34024</accession>
<comment type="function">
    <text>Cleaves glycosylphosphatidylinositol (GPI) and phosphatidylinositol (PI) anchors but not PI phosphates. Important factor in pathogenesis, PI-PLC activity is present only in virulent listeria species. It may participate in the lysis of the phagolysosomal membrane.</text>
</comment>
<comment type="catalytic activity">
    <reaction>
        <text>a 1,2-diacyl-sn-glycero-3-phospho-(1D-myo-inositol) = 1D-myo-inositol 1,2-cyclic phosphate + a 1,2-diacyl-sn-glycerol</text>
        <dbReference type="Rhea" id="RHEA:17093"/>
        <dbReference type="ChEBI" id="CHEBI:17815"/>
        <dbReference type="ChEBI" id="CHEBI:57880"/>
        <dbReference type="ChEBI" id="CHEBI:58484"/>
        <dbReference type="EC" id="4.6.1.13"/>
    </reaction>
</comment>
<comment type="subunit">
    <text>Monomer.</text>
</comment>
<comment type="subcellular location">
    <subcellularLocation>
        <location>Secreted</location>
    </subcellularLocation>
    <subcellularLocation>
        <location>Cytoplasm</location>
    </subcellularLocation>
    <text>Secreted and, to a lesser extent, cytoplasmic.</text>
</comment>
<keyword id="KW-0002">3D-structure</keyword>
<keyword id="KW-0963">Cytoplasm</keyword>
<keyword id="KW-0442">Lipid degradation</keyword>
<keyword id="KW-0443">Lipid metabolism</keyword>
<keyword id="KW-0456">Lyase</keyword>
<keyword id="KW-1185">Reference proteome</keyword>
<keyword id="KW-0964">Secreted</keyword>
<keyword id="KW-0732">Signal</keyword>
<keyword id="KW-0843">Virulence</keyword>
<evidence type="ECO:0000255" key="1"/>
<evidence type="ECO:0000255" key="2">
    <source>
        <dbReference type="PROSITE-ProRule" id="PRU00270"/>
    </source>
</evidence>
<evidence type="ECO:0007829" key="3">
    <source>
        <dbReference type="PDB" id="2PLC"/>
    </source>
</evidence>
<gene>
    <name type="primary">plcA</name>
    <name type="synonym">pic</name>
    <name type="ordered locus">lmo0201</name>
</gene>
<dbReference type="EC" id="4.6.1.13"/>
<dbReference type="EMBL" id="X54618">
    <property type="protein sequence ID" value="CAA38438.1"/>
    <property type="molecule type" value="Genomic_DNA"/>
</dbReference>
<dbReference type="EMBL" id="AL591974">
    <property type="protein sequence ID" value="CAD00728.1"/>
    <property type="molecule type" value="Genomic_DNA"/>
</dbReference>
<dbReference type="PIR" id="AB1100">
    <property type="entry name" value="AB1100"/>
</dbReference>
<dbReference type="PIR" id="S15336">
    <property type="entry name" value="A37204"/>
</dbReference>
<dbReference type="RefSeq" id="NP_463732.1">
    <property type="nucleotide sequence ID" value="NC_003210.1"/>
</dbReference>
<dbReference type="RefSeq" id="WP_003733144.1">
    <property type="nucleotide sequence ID" value="NZ_CP149495.1"/>
</dbReference>
<dbReference type="PDB" id="1AOD">
    <property type="method" value="X-ray"/>
    <property type="resolution" value="2.60 A"/>
    <property type="chains" value="A=29-317"/>
</dbReference>
<dbReference type="PDB" id="2PLC">
    <property type="method" value="X-ray"/>
    <property type="resolution" value="2.00 A"/>
    <property type="chains" value="A=43-316"/>
</dbReference>
<dbReference type="PDBsum" id="1AOD"/>
<dbReference type="PDBsum" id="2PLC"/>
<dbReference type="SMR" id="P34024"/>
<dbReference type="STRING" id="169963.gene:17592837"/>
<dbReference type="DrugBank" id="DB03106">
    <property type="generic name" value="scyllo-inositol"/>
</dbReference>
<dbReference type="PaxDb" id="169963-lmo0201"/>
<dbReference type="EnsemblBacteria" id="CAD00728">
    <property type="protein sequence ID" value="CAD00728"/>
    <property type="gene ID" value="CAD00728"/>
</dbReference>
<dbReference type="GeneID" id="987032"/>
<dbReference type="KEGG" id="lmo:lmo0201"/>
<dbReference type="PATRIC" id="fig|169963.11.peg.206"/>
<dbReference type="eggNOG" id="COG0823">
    <property type="taxonomic scope" value="Bacteria"/>
</dbReference>
<dbReference type="HOGENOM" id="CLU_024117_3_0_9"/>
<dbReference type="OrthoDB" id="7191982at2"/>
<dbReference type="BioCyc" id="LMON169963:LMO0201-MONOMER"/>
<dbReference type="EvolutionaryTrace" id="P34024"/>
<dbReference type="Proteomes" id="UP000000817">
    <property type="component" value="Chromosome"/>
</dbReference>
<dbReference type="GO" id="GO:0005737">
    <property type="term" value="C:cytoplasm"/>
    <property type="evidence" value="ECO:0007669"/>
    <property type="project" value="UniProtKB-SubCell"/>
</dbReference>
<dbReference type="GO" id="GO:0005576">
    <property type="term" value="C:extracellular region"/>
    <property type="evidence" value="ECO:0007669"/>
    <property type="project" value="UniProtKB-SubCell"/>
</dbReference>
<dbReference type="GO" id="GO:0004436">
    <property type="term" value="F:phosphatidylinositol diacylglycerol-lyase activity"/>
    <property type="evidence" value="ECO:0007669"/>
    <property type="project" value="UniProtKB-EC"/>
</dbReference>
<dbReference type="GO" id="GO:0008081">
    <property type="term" value="F:phosphoric diester hydrolase activity"/>
    <property type="evidence" value="ECO:0000318"/>
    <property type="project" value="GO_Central"/>
</dbReference>
<dbReference type="GO" id="GO:0016042">
    <property type="term" value="P:lipid catabolic process"/>
    <property type="evidence" value="ECO:0007669"/>
    <property type="project" value="UniProtKB-KW"/>
</dbReference>
<dbReference type="CDD" id="cd00137">
    <property type="entry name" value="PI-PLCc"/>
    <property type="match status" value="1"/>
</dbReference>
<dbReference type="Gene3D" id="3.20.20.190">
    <property type="entry name" value="Phosphatidylinositol (PI) phosphodiesterase"/>
    <property type="match status" value="1"/>
</dbReference>
<dbReference type="InterPro" id="IPR051057">
    <property type="entry name" value="PI-PLC_domain"/>
</dbReference>
<dbReference type="InterPro" id="IPR017946">
    <property type="entry name" value="PLC-like_Pdiesterase_TIM-brl"/>
</dbReference>
<dbReference type="InterPro" id="IPR000909">
    <property type="entry name" value="PLipase_C_PInositol-sp_X_dom"/>
</dbReference>
<dbReference type="PANTHER" id="PTHR13593">
    <property type="match status" value="1"/>
</dbReference>
<dbReference type="PANTHER" id="PTHR13593:SF113">
    <property type="entry name" value="SI:DKEY-266F7.9"/>
    <property type="match status" value="1"/>
</dbReference>
<dbReference type="Pfam" id="PF00388">
    <property type="entry name" value="PI-PLC-X"/>
    <property type="match status" value="1"/>
</dbReference>
<dbReference type="SMART" id="SM00148">
    <property type="entry name" value="PLCXc"/>
    <property type="match status" value="1"/>
</dbReference>
<dbReference type="SUPFAM" id="SSF51695">
    <property type="entry name" value="PLC-like phosphodiesterases"/>
    <property type="match status" value="1"/>
</dbReference>
<dbReference type="PROSITE" id="PS50007">
    <property type="entry name" value="PIPLC_X_DOMAIN"/>
    <property type="match status" value="1"/>
</dbReference>
<sequence length="317" mass="36318">MYKNYLQRTLVLLLCFILYFFTFPLGGKAYSLNNWNKPIKNSVTTKQWMSALPDTTNLAALSIPGTHDTMSYNGDITWTLTKPLAQTQTMSLYQQLEAGIRYIDIRAKDNLNIYHGPIFLNASLSGVLETITQFLKKNPKETIIMRLKDEQNSNDSFDYRIQPLINIYKDYFYTTPRTDTSNKIPTLKDVRGKILLLSENHTKKPLVINSRKFGMQFGAPNQVIQDDYNGPSVKTKFKEIVQTAYQASKADNKLFLNHISATSLTFTPRQYAAALNNKVEQFVLNLTSEKVRGLGILIMDFPEKQTIKNIIKNNKFN</sequence>
<organism>
    <name type="scientific">Listeria monocytogenes serovar 1/2a (strain ATCC BAA-679 / EGD-e)</name>
    <dbReference type="NCBI Taxonomy" id="169963"/>
    <lineage>
        <taxon>Bacteria</taxon>
        <taxon>Bacillati</taxon>
        <taxon>Bacillota</taxon>
        <taxon>Bacilli</taxon>
        <taxon>Bacillales</taxon>
        <taxon>Listeriaceae</taxon>
        <taxon>Listeria</taxon>
    </lineage>
</organism>
<proteinExistence type="evidence at protein level"/>
<name>PLC_LISMO</name>
<protein>
    <recommendedName>
        <fullName>1-phosphatidylinositol phosphodiesterase</fullName>
        <ecNumber>4.6.1.13</ecNumber>
    </recommendedName>
    <alternativeName>
        <fullName>Phosphatidylinositol diacylglycerol-lyase</fullName>
    </alternativeName>
    <alternativeName>
        <fullName>Phosphatidylinositol-specific phospholipase C</fullName>
        <shortName>PI-PLC</shortName>
    </alternativeName>
</protein>
<reference key="1">
    <citation type="journal article" date="1991" name="Mol. Microbiol.">
        <title>Identification of phosphatidylinositol-specific phospholipase C activity in Listeria monocytogenes: a novel type of virulence factor?</title>
        <authorList>
            <person name="Mengaud J."/>
            <person name="Braun-Breton C."/>
            <person name="Cossart P."/>
        </authorList>
    </citation>
    <scope>NUCLEOTIDE SEQUENCE [GENOMIC DNA]</scope>
    <source>
        <strain>LO28 / Serovar 1/2c</strain>
    </source>
</reference>
<reference key="2">
    <citation type="journal article" date="1991" name="Mol. Microbiol.">
        <title>Detection of a gene encoding a phosphatidylinositol-specific phospholipase C that is co-ordinately expressed with listeriolysin in Listeria monocytogenes.</title>
        <authorList>
            <person name="Leimeister-Waechter M."/>
            <person name="Domann E."/>
            <person name="Chakraborty T."/>
        </authorList>
    </citation>
    <scope>NUCLEOTIDE SEQUENCE [GENOMIC DNA]</scope>
    <source>
        <strain>EGD / Serovar 1/2a</strain>
    </source>
</reference>
<reference key="3">
    <citation type="journal article" date="2001" name="Science">
        <title>Comparative genomics of Listeria species.</title>
        <authorList>
            <person name="Glaser P."/>
            <person name="Frangeul L."/>
            <person name="Buchrieser C."/>
            <person name="Rusniok C."/>
            <person name="Amend A."/>
            <person name="Baquero F."/>
            <person name="Berche P."/>
            <person name="Bloecker H."/>
            <person name="Brandt P."/>
            <person name="Chakraborty T."/>
            <person name="Charbit A."/>
            <person name="Chetouani F."/>
            <person name="Couve E."/>
            <person name="de Daruvar A."/>
            <person name="Dehoux P."/>
            <person name="Domann E."/>
            <person name="Dominguez-Bernal G."/>
            <person name="Duchaud E."/>
            <person name="Durant L."/>
            <person name="Dussurget O."/>
            <person name="Entian K.-D."/>
            <person name="Fsihi H."/>
            <person name="Garcia-del Portillo F."/>
            <person name="Garrido P."/>
            <person name="Gautier L."/>
            <person name="Goebel W."/>
            <person name="Gomez-Lopez N."/>
            <person name="Hain T."/>
            <person name="Hauf J."/>
            <person name="Jackson D."/>
            <person name="Jones L.-M."/>
            <person name="Kaerst U."/>
            <person name="Kreft J."/>
            <person name="Kuhn M."/>
            <person name="Kunst F."/>
            <person name="Kurapkat G."/>
            <person name="Madueno E."/>
            <person name="Maitournam A."/>
            <person name="Mata Vicente J."/>
            <person name="Ng E."/>
            <person name="Nedjari H."/>
            <person name="Nordsiek G."/>
            <person name="Novella S."/>
            <person name="de Pablos B."/>
            <person name="Perez-Diaz J.-C."/>
            <person name="Purcell R."/>
            <person name="Remmel B."/>
            <person name="Rose M."/>
            <person name="Schlueter T."/>
            <person name="Simoes N."/>
            <person name="Tierrez A."/>
            <person name="Vazquez-Boland J.-A."/>
            <person name="Voss H."/>
            <person name="Wehland J."/>
            <person name="Cossart P."/>
        </authorList>
    </citation>
    <scope>NUCLEOTIDE SEQUENCE [LARGE SCALE GENOMIC DNA]</scope>
    <source>
        <strain>ATCC BAA-679 / EGD-e</strain>
    </source>
</reference>
<reference key="4">
    <citation type="journal article" date="1989" name="Infect. Immun.">
        <title>Transcriptional mapping and nucleotide sequence of the Listeria monocytogenes hlyA region reveal structural features that may be involved in regulation.</title>
        <authorList>
            <person name="Mengaud J."/>
            <person name="Vicente M.-F."/>
            <person name="Cossart P."/>
        </authorList>
    </citation>
    <scope>NUCLEOTIDE SEQUENCE [GENOMIC DNA] OF 70-317</scope>
</reference>
<reference key="5">
    <citation type="journal article" date="1997" name="J. Mol. Biol.">
        <title>Crystal structure of the phosphatidylinositol-specific phospholipase C from the human pathogen Listeria monocytogenes.</title>
        <authorList>
            <person name="Moser J."/>
            <person name="Gerstel B."/>
            <person name="Meyer J.E."/>
            <person name="Chakraborty T."/>
            <person name="Wehland J."/>
            <person name="Heinz D.W."/>
        </authorList>
    </citation>
    <scope>X-RAY CRYSTALLOGRAPHY (2.0 ANGSTROMS) OF 43-317</scope>
    <source>
        <strain>EGD / Serovar 1/2a</strain>
    </source>
</reference>
<feature type="signal peptide" evidence="1">
    <location>
        <begin position="1"/>
        <end position="22"/>
    </location>
</feature>
<feature type="chain" id="PRO_0000024296" description="1-phosphatidylinositol phosphodiesterase">
    <location>
        <begin position="23"/>
        <end position="317"/>
    </location>
</feature>
<feature type="domain" description="PI-PLC X-box" evidence="2">
    <location>
        <begin position="58"/>
        <end position="196"/>
    </location>
</feature>
<feature type="active site" description="Proton acceptor">
    <location>
        <position position="67"/>
    </location>
</feature>
<feature type="active site" description="Proton donor">
    <location>
        <position position="115"/>
    </location>
</feature>
<feature type="helix" evidence="3">
    <location>
        <begin position="45"/>
        <end position="47"/>
    </location>
</feature>
<feature type="helix" evidence="3">
    <location>
        <begin position="49"/>
        <end position="51"/>
    </location>
</feature>
<feature type="helix" evidence="3">
    <location>
        <begin position="58"/>
        <end position="60"/>
    </location>
</feature>
<feature type="strand" evidence="3">
    <location>
        <begin position="61"/>
        <end position="66"/>
    </location>
</feature>
<feature type="turn" evidence="3">
    <location>
        <begin position="67"/>
        <end position="72"/>
    </location>
</feature>
<feature type="helix" evidence="3">
    <location>
        <begin position="76"/>
        <end position="80"/>
    </location>
</feature>
<feature type="helix" evidence="3">
    <location>
        <begin position="82"/>
        <end position="85"/>
    </location>
</feature>
<feature type="helix" evidence="3">
    <location>
        <begin position="92"/>
        <end position="97"/>
    </location>
</feature>
<feature type="strand" evidence="3">
    <location>
        <begin position="102"/>
        <end position="107"/>
    </location>
</feature>
<feature type="strand" evidence="3">
    <location>
        <begin position="111"/>
        <end position="115"/>
    </location>
</feature>
<feature type="strand" evidence="3">
    <location>
        <begin position="118"/>
        <end position="123"/>
    </location>
</feature>
<feature type="helix" evidence="3">
    <location>
        <begin position="124"/>
        <end position="137"/>
    </location>
</feature>
<feature type="strand" evidence="3">
    <location>
        <begin position="143"/>
        <end position="149"/>
    </location>
</feature>
<feature type="helix" evidence="3">
    <location>
        <begin position="156"/>
        <end position="167"/>
    </location>
</feature>
<feature type="helix" evidence="3">
    <location>
        <begin position="168"/>
        <end position="171"/>
    </location>
</feature>
<feature type="strand" evidence="3">
    <location>
        <begin position="174"/>
        <end position="178"/>
    </location>
</feature>
<feature type="turn" evidence="3">
    <location>
        <begin position="187"/>
        <end position="192"/>
    </location>
</feature>
<feature type="strand" evidence="3">
    <location>
        <begin position="194"/>
        <end position="200"/>
    </location>
</feature>
<feature type="strand" evidence="3">
    <location>
        <begin position="206"/>
        <end position="208"/>
    </location>
</feature>
<feature type="strand" evidence="3">
    <location>
        <begin position="211"/>
        <end position="216"/>
    </location>
</feature>
<feature type="strand" evidence="3">
    <location>
        <begin position="222"/>
        <end position="225"/>
    </location>
</feature>
<feature type="helix" evidence="3">
    <location>
        <begin position="233"/>
        <end position="249"/>
    </location>
</feature>
<feature type="strand" evidence="3">
    <location>
        <begin position="251"/>
        <end position="258"/>
    </location>
</feature>
<feature type="strand" evidence="3">
    <location>
        <begin position="264"/>
        <end position="266"/>
    </location>
</feature>
<feature type="helix" evidence="3">
    <location>
        <begin position="268"/>
        <end position="288"/>
    </location>
</feature>
<feature type="strand" evidence="3">
    <location>
        <begin position="295"/>
        <end position="301"/>
    </location>
</feature>
<feature type="helix" evidence="3">
    <location>
        <begin position="304"/>
        <end position="311"/>
    </location>
</feature>